<feature type="chain" id="PRO_0000363002" description="DNA repair protein rhp7">
    <location>
        <begin position="1"/>
        <end position="563"/>
    </location>
</feature>
<feature type="region of interest" description="Disordered" evidence="1">
    <location>
        <begin position="1"/>
        <end position="101"/>
    </location>
</feature>
<feature type="compositionally biased region" description="Polar residues" evidence="1">
    <location>
        <begin position="39"/>
        <end position="59"/>
    </location>
</feature>
<feature type="compositionally biased region" description="Basic residues" evidence="1">
    <location>
        <begin position="78"/>
        <end position="90"/>
    </location>
</feature>
<evidence type="ECO:0000256" key="1">
    <source>
        <dbReference type="SAM" id="MobiDB-lite"/>
    </source>
</evidence>
<evidence type="ECO:0000269" key="2">
    <source>
    </source>
</evidence>
<evidence type="ECO:0000269" key="3">
    <source>
    </source>
</evidence>
<evidence type="ECO:0000305" key="4"/>
<keyword id="KW-0227">DNA damage</keyword>
<keyword id="KW-0234">DNA repair</keyword>
<keyword id="KW-0539">Nucleus</keyword>
<keyword id="KW-1185">Reference proteome</keyword>
<organism>
    <name type="scientific">Schizosaccharomyces pombe (strain 972 / ATCC 24843)</name>
    <name type="common">Fission yeast</name>
    <dbReference type="NCBI Taxonomy" id="284812"/>
    <lineage>
        <taxon>Eukaryota</taxon>
        <taxon>Fungi</taxon>
        <taxon>Dikarya</taxon>
        <taxon>Ascomycota</taxon>
        <taxon>Taphrinomycotina</taxon>
        <taxon>Schizosaccharomycetes</taxon>
        <taxon>Schizosaccharomycetales</taxon>
        <taxon>Schizosaccharomycetaceae</taxon>
        <taxon>Schizosaccharomyces</taxon>
    </lineage>
</organism>
<sequence>MSSGSRVRGPNSALTEFLRSQGINASALGRARPPRQSEESAGQSTGTESEVIQTPTSVEENNEDENSMSTTTIEIPVVKRRNLRNQKKKKKTDEEAEDNEDTFSMNSRAGFSYKAREHTGKLDFCAHCNCRFTITPYSKYSNSEKGWLCYPCSRGAEDRSVPELRTRKRKALTRKKVAAATMDEEISVPKLQDLCIRVIAEYINDIEAFGDIGQVNMDKISQIISKNRSLNDTTVKLFLSGGQTELKLYDCSKITADSLFQIAQYCPNLQTLHLTYCGQMQDQVLHFYADHLTELTDVSFQGAFLVSSSEWINFFKKRGSKLISLELTDTARIHVSVINAIVDCCPNLISLNLSRIFYLDDECVRLLAGCRNLVSLKIESPGGIINDGSILDVLNQIGSGLHTLSLSGCTKLTDEVLKQGIGPCCGRLKHLNLSGLELLTDDEASIVFGEWKIQSGLETLSLRRCLSLGDKTVRAVLVNSGHTLRTLDLNGMSFVTDEALQYIVNFPLPMLKALDVSWIRGMNDKLVCDFESKKPTLEKLLVWGDNHVLMPSNRLLLIGREVQ</sequence>
<accession>O74999</accession>
<proteinExistence type="inferred from homology"/>
<reference key="1">
    <citation type="journal article" date="2002" name="Nature">
        <title>The genome sequence of Schizosaccharomyces pombe.</title>
        <authorList>
            <person name="Wood V."/>
            <person name="Gwilliam R."/>
            <person name="Rajandream M.A."/>
            <person name="Lyne M.H."/>
            <person name="Lyne R."/>
            <person name="Stewart A."/>
            <person name="Sgouros J.G."/>
            <person name="Peat N."/>
            <person name="Hayles J."/>
            <person name="Baker S.G."/>
            <person name="Basham D."/>
            <person name="Bowman S."/>
            <person name="Brooks K."/>
            <person name="Brown D."/>
            <person name="Brown S."/>
            <person name="Chillingworth T."/>
            <person name="Churcher C.M."/>
            <person name="Collins M."/>
            <person name="Connor R."/>
            <person name="Cronin A."/>
            <person name="Davis P."/>
            <person name="Feltwell T."/>
            <person name="Fraser A."/>
            <person name="Gentles S."/>
            <person name="Goble A."/>
            <person name="Hamlin N."/>
            <person name="Harris D.E."/>
            <person name="Hidalgo J."/>
            <person name="Hodgson G."/>
            <person name="Holroyd S."/>
            <person name="Hornsby T."/>
            <person name="Howarth S."/>
            <person name="Huckle E.J."/>
            <person name="Hunt S."/>
            <person name="Jagels K."/>
            <person name="James K.D."/>
            <person name="Jones L."/>
            <person name="Jones M."/>
            <person name="Leather S."/>
            <person name="McDonald S."/>
            <person name="McLean J."/>
            <person name="Mooney P."/>
            <person name="Moule S."/>
            <person name="Mungall K.L."/>
            <person name="Murphy L.D."/>
            <person name="Niblett D."/>
            <person name="Odell C."/>
            <person name="Oliver K."/>
            <person name="O'Neil S."/>
            <person name="Pearson D."/>
            <person name="Quail M.A."/>
            <person name="Rabbinowitsch E."/>
            <person name="Rutherford K.M."/>
            <person name="Rutter S."/>
            <person name="Saunders D."/>
            <person name="Seeger K."/>
            <person name="Sharp S."/>
            <person name="Skelton J."/>
            <person name="Simmonds M.N."/>
            <person name="Squares R."/>
            <person name="Squares S."/>
            <person name="Stevens K."/>
            <person name="Taylor K."/>
            <person name="Taylor R.G."/>
            <person name="Tivey A."/>
            <person name="Walsh S.V."/>
            <person name="Warren T."/>
            <person name="Whitehead S."/>
            <person name="Woodward J.R."/>
            <person name="Volckaert G."/>
            <person name="Aert R."/>
            <person name="Robben J."/>
            <person name="Grymonprez B."/>
            <person name="Weltjens I."/>
            <person name="Vanstreels E."/>
            <person name="Rieger M."/>
            <person name="Schaefer M."/>
            <person name="Mueller-Auer S."/>
            <person name="Gabel C."/>
            <person name="Fuchs M."/>
            <person name="Duesterhoeft A."/>
            <person name="Fritzc C."/>
            <person name="Holzer E."/>
            <person name="Moestl D."/>
            <person name="Hilbert H."/>
            <person name="Borzym K."/>
            <person name="Langer I."/>
            <person name="Beck A."/>
            <person name="Lehrach H."/>
            <person name="Reinhardt R."/>
            <person name="Pohl T.M."/>
            <person name="Eger P."/>
            <person name="Zimmermann W."/>
            <person name="Wedler H."/>
            <person name="Wambutt R."/>
            <person name="Purnelle B."/>
            <person name="Goffeau A."/>
            <person name="Cadieu E."/>
            <person name="Dreano S."/>
            <person name="Gloux S."/>
            <person name="Lelaure V."/>
            <person name="Mottier S."/>
            <person name="Galibert F."/>
            <person name="Aves S.J."/>
            <person name="Xiang Z."/>
            <person name="Hunt C."/>
            <person name="Moore K."/>
            <person name="Hurst S.M."/>
            <person name="Lucas M."/>
            <person name="Rochet M."/>
            <person name="Gaillardin C."/>
            <person name="Tallada V.A."/>
            <person name="Garzon A."/>
            <person name="Thode G."/>
            <person name="Daga R.R."/>
            <person name="Cruzado L."/>
            <person name="Jimenez J."/>
            <person name="Sanchez M."/>
            <person name="del Rey F."/>
            <person name="Benito J."/>
            <person name="Dominguez A."/>
            <person name="Revuelta J.L."/>
            <person name="Moreno S."/>
            <person name="Armstrong J."/>
            <person name="Forsburg S.L."/>
            <person name="Cerutti L."/>
            <person name="Lowe T."/>
            <person name="McCombie W.R."/>
            <person name="Paulsen I."/>
            <person name="Potashkin J."/>
            <person name="Shpakovski G.V."/>
            <person name="Ussery D."/>
            <person name="Barrell B.G."/>
            <person name="Nurse P."/>
        </authorList>
    </citation>
    <scope>NUCLEOTIDE SEQUENCE [LARGE SCALE GENOMIC DNA]</scope>
    <source>
        <strain>972 / ATCC 24843</strain>
    </source>
</reference>
<reference key="2">
    <citation type="journal article" date="1999" name="Nucleic Acids Res.">
        <title>Characterization of the rhp7(+) and rhp16(+) genes in Schizosaccharomyces pombe.</title>
        <authorList>
            <person name="Lombaerts M."/>
            <person name="Peltola P.H."/>
            <person name="Visse R."/>
            <person name="den Dulk H."/>
            <person name="Brandsma J.A."/>
            <person name="Brouwer J."/>
        </authorList>
    </citation>
    <scope>FUNCTION</scope>
</reference>
<reference key="3">
    <citation type="journal article" date="2006" name="Nat. Biotechnol.">
        <title>ORFeome cloning and global analysis of protein localization in the fission yeast Schizosaccharomyces pombe.</title>
        <authorList>
            <person name="Matsuyama A."/>
            <person name="Arai R."/>
            <person name="Yashiroda Y."/>
            <person name="Shirai A."/>
            <person name="Kamata A."/>
            <person name="Sekido S."/>
            <person name="Kobayashi Y."/>
            <person name="Hashimoto A."/>
            <person name="Hamamoto M."/>
            <person name="Hiraoka Y."/>
            <person name="Horinouchi S."/>
            <person name="Yoshida M."/>
        </authorList>
    </citation>
    <scope>SUBCELLULAR LOCATION [LARGE SCALE ANALYSIS]</scope>
</reference>
<comment type="function">
    <text evidence="2">Involved in global genome repair (GGR) via nucleotide excision repair (NER), in conjunction with rhp16, after UV irradiation.</text>
</comment>
<comment type="subcellular location">
    <subcellularLocation>
        <location evidence="3">Nucleus</location>
    </subcellularLocation>
</comment>
<comment type="similarity">
    <text evidence="4">Belongs to the RAD7 family.</text>
</comment>
<protein>
    <recommendedName>
        <fullName>DNA repair protein rhp7</fullName>
    </recommendedName>
    <alternativeName>
        <fullName>RAD7 homolog</fullName>
    </alternativeName>
</protein>
<name>RAD7_SCHPO</name>
<dbReference type="EMBL" id="CU329672">
    <property type="protein sequence ID" value="CAA21066.1"/>
    <property type="molecule type" value="Genomic_DNA"/>
</dbReference>
<dbReference type="PIR" id="T41312">
    <property type="entry name" value="T41312"/>
</dbReference>
<dbReference type="RefSeq" id="NP_587702.1">
    <property type="nucleotide sequence ID" value="NM_001022697.2"/>
</dbReference>
<dbReference type="SMR" id="O74999"/>
<dbReference type="BioGRID" id="275666">
    <property type="interactions" value="21"/>
</dbReference>
<dbReference type="FunCoup" id="O74999">
    <property type="interactions" value="291"/>
</dbReference>
<dbReference type="STRING" id="284812.O74999"/>
<dbReference type="iPTMnet" id="O74999"/>
<dbReference type="PaxDb" id="4896-SPCC330.02.1"/>
<dbReference type="EnsemblFungi" id="SPCC330.02.1">
    <property type="protein sequence ID" value="SPCC330.02.1:pep"/>
    <property type="gene ID" value="SPCC330.02"/>
</dbReference>
<dbReference type="GeneID" id="2539094"/>
<dbReference type="KEGG" id="spo:2539094"/>
<dbReference type="PomBase" id="SPCC330.02">
    <property type="gene designation" value="rhp7"/>
</dbReference>
<dbReference type="VEuPathDB" id="FungiDB:SPCC330.02"/>
<dbReference type="eggNOG" id="KOG1947">
    <property type="taxonomic scope" value="Eukaryota"/>
</dbReference>
<dbReference type="HOGENOM" id="CLU_006598_2_1_1"/>
<dbReference type="InParanoid" id="O74999"/>
<dbReference type="OMA" id="ACRHISR"/>
<dbReference type="PhylomeDB" id="O74999"/>
<dbReference type="PRO" id="PR:O74999"/>
<dbReference type="Proteomes" id="UP000002485">
    <property type="component" value="Chromosome III"/>
</dbReference>
<dbReference type="GO" id="GO:0005737">
    <property type="term" value="C:cytoplasm"/>
    <property type="evidence" value="ECO:0000318"/>
    <property type="project" value="GO_Central"/>
</dbReference>
<dbReference type="GO" id="GO:0044732">
    <property type="term" value="C:mitotic spindle pole body"/>
    <property type="evidence" value="ECO:0007005"/>
    <property type="project" value="PomBase"/>
</dbReference>
<dbReference type="GO" id="GO:0000109">
    <property type="term" value="C:nucleotide-excision repair complex"/>
    <property type="evidence" value="ECO:0000353"/>
    <property type="project" value="PomBase"/>
</dbReference>
<dbReference type="GO" id="GO:0005634">
    <property type="term" value="C:nucleus"/>
    <property type="evidence" value="ECO:0007005"/>
    <property type="project" value="PomBase"/>
</dbReference>
<dbReference type="GO" id="GO:0006289">
    <property type="term" value="P:nucleotide-excision repair"/>
    <property type="evidence" value="ECO:0000316"/>
    <property type="project" value="PomBase"/>
</dbReference>
<dbReference type="Gene3D" id="3.80.10.10">
    <property type="entry name" value="Ribonuclease Inhibitor"/>
    <property type="match status" value="1"/>
</dbReference>
<dbReference type="InterPro" id="IPR006553">
    <property type="entry name" value="Leu-rich_rpt_Cys-con_subtyp"/>
</dbReference>
<dbReference type="InterPro" id="IPR032675">
    <property type="entry name" value="LRR_dom_sf"/>
</dbReference>
<dbReference type="InterPro" id="IPR056451">
    <property type="entry name" value="Znf_Tbcl_Rhp7"/>
</dbReference>
<dbReference type="PANTHER" id="PTHR13318">
    <property type="entry name" value="PARTNER OF PAIRED, ISOFORM B-RELATED"/>
    <property type="match status" value="1"/>
</dbReference>
<dbReference type="Pfam" id="PF23550">
    <property type="entry name" value="zf_Tbcl_Rhp7"/>
    <property type="match status" value="1"/>
</dbReference>
<dbReference type="SMART" id="SM00367">
    <property type="entry name" value="LRR_CC"/>
    <property type="match status" value="8"/>
</dbReference>
<dbReference type="SUPFAM" id="SSF52047">
    <property type="entry name" value="RNI-like"/>
    <property type="match status" value="2"/>
</dbReference>
<gene>
    <name type="primary">rhp7</name>
    <name type="ORF">SPCC330.02</name>
    <name type="ORF">SPCC613.14</name>
</gene>